<organism>
    <name type="scientific">Gemmatimonas aurantiaca (strain DSM 14586 / JCM 11422 / NBRC 100505 / T-27)</name>
    <dbReference type="NCBI Taxonomy" id="379066"/>
    <lineage>
        <taxon>Bacteria</taxon>
        <taxon>Pseudomonadati</taxon>
        <taxon>Gemmatimonadota</taxon>
        <taxon>Gemmatimonadia</taxon>
        <taxon>Gemmatimonadales</taxon>
        <taxon>Gemmatimonadaceae</taxon>
        <taxon>Gemmatimonas</taxon>
    </lineage>
</organism>
<accession>C1A4H0</accession>
<protein>
    <recommendedName>
        <fullName evidence="1">UvrABC system protein B</fullName>
        <shortName evidence="1">Protein UvrB</shortName>
    </recommendedName>
    <alternativeName>
        <fullName evidence="1">Excinuclease ABC subunit B</fullName>
    </alternativeName>
</protein>
<keyword id="KW-0067">ATP-binding</keyword>
<keyword id="KW-0963">Cytoplasm</keyword>
<keyword id="KW-0227">DNA damage</keyword>
<keyword id="KW-0228">DNA excision</keyword>
<keyword id="KW-0234">DNA repair</keyword>
<keyword id="KW-0267">Excision nuclease</keyword>
<keyword id="KW-0347">Helicase</keyword>
<keyword id="KW-0378">Hydrolase</keyword>
<keyword id="KW-0547">Nucleotide-binding</keyword>
<keyword id="KW-1185">Reference proteome</keyword>
<keyword id="KW-0742">SOS response</keyword>
<feature type="chain" id="PRO_1000204134" description="UvrABC system protein B">
    <location>
        <begin position="1"/>
        <end position="700"/>
    </location>
</feature>
<feature type="domain" description="Helicase ATP-binding" evidence="1">
    <location>
        <begin position="26"/>
        <end position="183"/>
    </location>
</feature>
<feature type="domain" description="Helicase C-terminal" evidence="1">
    <location>
        <begin position="430"/>
        <end position="596"/>
    </location>
</feature>
<feature type="domain" description="UVR" evidence="1">
    <location>
        <begin position="631"/>
        <end position="666"/>
    </location>
</feature>
<feature type="region of interest" description="Disordered" evidence="2">
    <location>
        <begin position="608"/>
        <end position="627"/>
    </location>
</feature>
<feature type="region of interest" description="Disordered" evidence="2">
    <location>
        <begin position="667"/>
        <end position="700"/>
    </location>
</feature>
<feature type="short sequence motif" description="Beta-hairpin">
    <location>
        <begin position="92"/>
        <end position="115"/>
    </location>
</feature>
<feature type="binding site" evidence="1">
    <location>
        <begin position="39"/>
        <end position="46"/>
    </location>
    <ligand>
        <name>ATP</name>
        <dbReference type="ChEBI" id="CHEBI:30616"/>
    </ligand>
</feature>
<reference key="1">
    <citation type="submission" date="2006-03" db="EMBL/GenBank/DDBJ databases">
        <title>Complete genome sequence of Gemmatimonas aurantiaca T-27 that represents a novel phylum Gemmatimonadetes.</title>
        <authorList>
            <person name="Takasaki K."/>
            <person name="Ichikawa N."/>
            <person name="Miura H."/>
            <person name="Matsushita S."/>
            <person name="Watanabe Y."/>
            <person name="Oguchi A."/>
            <person name="Ankai A."/>
            <person name="Yashiro I."/>
            <person name="Takahashi M."/>
            <person name="Terui Y."/>
            <person name="Fukui S."/>
            <person name="Yokoyama H."/>
            <person name="Tanikawa S."/>
            <person name="Hanada S."/>
            <person name="Kamagata Y."/>
            <person name="Fujita N."/>
        </authorList>
    </citation>
    <scope>NUCLEOTIDE SEQUENCE [LARGE SCALE GENOMIC DNA]</scope>
    <source>
        <strain>DSM 14586 / JCM 11422 / NBRC 100505 / T-27</strain>
    </source>
</reference>
<proteinExistence type="inferred from homology"/>
<name>UVRB_GEMAT</name>
<sequence>MTAPFRLHAPFAPAGDQPRAITELSSGLHRGDRIQTLLGVTGSGKTMTMANVIADWGRPTLVLSHNKTLAAQLYGELKSFFPNNAVEYFISYYDYYQPEAYVPSSDTYIEKDASINEDIDRLRLRATSSLMERDDVVIVSTVSAIYGLGDPVQYRERMVALSRGQQIARDDILRALVGIQYLRNDVAFERGTFRVRGDTVEILPAYEEQAVRIELWGDEIERISKIDPVTGETIAALERMAIYPAKHFITNRPTIERASMAIRDELATRLAELRMAGKLLEAQRLEQRTQFDLEMLMEIGTCAGIENYSRHISGREAGERPACLLDYFPDDYLVVVDESHVTLPQIRAMYNGDRARKLTLVDYGFRLPSALDNRPLVFDEFMSLVPRLVNVSATPGELELQLSEGVVVEQVIRPTGLLDPVLEVRPVKGQVDDLLHEIRARERRGERVLVTTLTKRMSEDLTDYLQQMGVRVRYMHSDIDAIERMEIVRGLRLGEFDVLVGINLLREGLDMPEVSLVAILDADQEGFLRSDRSLIQTIGRAARNLHGMAILYGDRITGSMQRAIDETTRRRTIQREHNEAHGIVPRGVTKSVDEVRFITRVADARVEREGEAPAPRRLASESAPRSREELETLVGELEIAMREAAVALDFEAAARLRDQLFEVRTALGQAPSEARGNAQAPKRPPGSAPQRRAGGGRRGR</sequence>
<dbReference type="EMBL" id="AP009153">
    <property type="protein sequence ID" value="BAH38995.1"/>
    <property type="molecule type" value="Genomic_DNA"/>
</dbReference>
<dbReference type="RefSeq" id="WP_012683442.1">
    <property type="nucleotide sequence ID" value="NC_012489.1"/>
</dbReference>
<dbReference type="SMR" id="C1A4H0"/>
<dbReference type="STRING" id="379066.GAU_1953"/>
<dbReference type="KEGG" id="gau:GAU_1953"/>
<dbReference type="eggNOG" id="COG0556">
    <property type="taxonomic scope" value="Bacteria"/>
</dbReference>
<dbReference type="HOGENOM" id="CLU_009621_2_1_0"/>
<dbReference type="OrthoDB" id="9806651at2"/>
<dbReference type="Proteomes" id="UP000002209">
    <property type="component" value="Chromosome"/>
</dbReference>
<dbReference type="GO" id="GO:0005737">
    <property type="term" value="C:cytoplasm"/>
    <property type="evidence" value="ECO:0007669"/>
    <property type="project" value="UniProtKB-SubCell"/>
</dbReference>
<dbReference type="GO" id="GO:0009380">
    <property type="term" value="C:excinuclease repair complex"/>
    <property type="evidence" value="ECO:0007669"/>
    <property type="project" value="InterPro"/>
</dbReference>
<dbReference type="GO" id="GO:0005524">
    <property type="term" value="F:ATP binding"/>
    <property type="evidence" value="ECO:0007669"/>
    <property type="project" value="UniProtKB-UniRule"/>
</dbReference>
<dbReference type="GO" id="GO:0016887">
    <property type="term" value="F:ATP hydrolysis activity"/>
    <property type="evidence" value="ECO:0007669"/>
    <property type="project" value="InterPro"/>
</dbReference>
<dbReference type="GO" id="GO:0003677">
    <property type="term" value="F:DNA binding"/>
    <property type="evidence" value="ECO:0007669"/>
    <property type="project" value="UniProtKB-UniRule"/>
</dbReference>
<dbReference type="GO" id="GO:0009381">
    <property type="term" value="F:excinuclease ABC activity"/>
    <property type="evidence" value="ECO:0007669"/>
    <property type="project" value="UniProtKB-UniRule"/>
</dbReference>
<dbReference type="GO" id="GO:0004386">
    <property type="term" value="F:helicase activity"/>
    <property type="evidence" value="ECO:0007669"/>
    <property type="project" value="UniProtKB-KW"/>
</dbReference>
<dbReference type="GO" id="GO:0006289">
    <property type="term" value="P:nucleotide-excision repair"/>
    <property type="evidence" value="ECO:0007669"/>
    <property type="project" value="UniProtKB-UniRule"/>
</dbReference>
<dbReference type="GO" id="GO:0009432">
    <property type="term" value="P:SOS response"/>
    <property type="evidence" value="ECO:0007669"/>
    <property type="project" value="UniProtKB-UniRule"/>
</dbReference>
<dbReference type="CDD" id="cd17916">
    <property type="entry name" value="DEXHc_UvrB"/>
    <property type="match status" value="1"/>
</dbReference>
<dbReference type="CDD" id="cd18790">
    <property type="entry name" value="SF2_C_UvrB"/>
    <property type="match status" value="1"/>
</dbReference>
<dbReference type="Gene3D" id="3.40.50.300">
    <property type="entry name" value="P-loop containing nucleotide triphosphate hydrolases"/>
    <property type="match status" value="3"/>
</dbReference>
<dbReference type="Gene3D" id="4.10.860.10">
    <property type="entry name" value="UVR domain"/>
    <property type="match status" value="1"/>
</dbReference>
<dbReference type="HAMAP" id="MF_00204">
    <property type="entry name" value="UvrB"/>
    <property type="match status" value="1"/>
</dbReference>
<dbReference type="InterPro" id="IPR006935">
    <property type="entry name" value="Helicase/UvrB_N"/>
</dbReference>
<dbReference type="InterPro" id="IPR014001">
    <property type="entry name" value="Helicase_ATP-bd"/>
</dbReference>
<dbReference type="InterPro" id="IPR001650">
    <property type="entry name" value="Helicase_C-like"/>
</dbReference>
<dbReference type="InterPro" id="IPR027417">
    <property type="entry name" value="P-loop_NTPase"/>
</dbReference>
<dbReference type="InterPro" id="IPR001943">
    <property type="entry name" value="UVR_dom"/>
</dbReference>
<dbReference type="InterPro" id="IPR036876">
    <property type="entry name" value="UVR_dom_sf"/>
</dbReference>
<dbReference type="InterPro" id="IPR004807">
    <property type="entry name" value="UvrB"/>
</dbReference>
<dbReference type="InterPro" id="IPR041471">
    <property type="entry name" value="UvrB_inter"/>
</dbReference>
<dbReference type="InterPro" id="IPR024759">
    <property type="entry name" value="UvrB_YAD/RRR_dom"/>
</dbReference>
<dbReference type="NCBIfam" id="NF003673">
    <property type="entry name" value="PRK05298.1"/>
    <property type="match status" value="1"/>
</dbReference>
<dbReference type="NCBIfam" id="TIGR00631">
    <property type="entry name" value="uvrb"/>
    <property type="match status" value="1"/>
</dbReference>
<dbReference type="PANTHER" id="PTHR24029">
    <property type="entry name" value="UVRABC SYSTEM PROTEIN B"/>
    <property type="match status" value="1"/>
</dbReference>
<dbReference type="PANTHER" id="PTHR24029:SF0">
    <property type="entry name" value="UVRABC SYSTEM PROTEIN B"/>
    <property type="match status" value="1"/>
</dbReference>
<dbReference type="Pfam" id="PF00271">
    <property type="entry name" value="Helicase_C"/>
    <property type="match status" value="1"/>
</dbReference>
<dbReference type="Pfam" id="PF04851">
    <property type="entry name" value="ResIII"/>
    <property type="match status" value="1"/>
</dbReference>
<dbReference type="Pfam" id="PF02151">
    <property type="entry name" value="UVR"/>
    <property type="match status" value="1"/>
</dbReference>
<dbReference type="Pfam" id="PF12344">
    <property type="entry name" value="UvrB"/>
    <property type="match status" value="1"/>
</dbReference>
<dbReference type="Pfam" id="PF17757">
    <property type="entry name" value="UvrB_inter"/>
    <property type="match status" value="1"/>
</dbReference>
<dbReference type="SMART" id="SM00487">
    <property type="entry name" value="DEXDc"/>
    <property type="match status" value="1"/>
</dbReference>
<dbReference type="SMART" id="SM00490">
    <property type="entry name" value="HELICc"/>
    <property type="match status" value="1"/>
</dbReference>
<dbReference type="SUPFAM" id="SSF46600">
    <property type="entry name" value="C-terminal UvrC-binding domain of UvrB"/>
    <property type="match status" value="1"/>
</dbReference>
<dbReference type="SUPFAM" id="SSF52540">
    <property type="entry name" value="P-loop containing nucleoside triphosphate hydrolases"/>
    <property type="match status" value="2"/>
</dbReference>
<dbReference type="PROSITE" id="PS51192">
    <property type="entry name" value="HELICASE_ATP_BIND_1"/>
    <property type="match status" value="1"/>
</dbReference>
<dbReference type="PROSITE" id="PS51194">
    <property type="entry name" value="HELICASE_CTER"/>
    <property type="match status" value="1"/>
</dbReference>
<dbReference type="PROSITE" id="PS50151">
    <property type="entry name" value="UVR"/>
    <property type="match status" value="1"/>
</dbReference>
<gene>
    <name evidence="1" type="primary">uvrB</name>
    <name type="ordered locus">GAU_1953</name>
</gene>
<comment type="function">
    <text evidence="1">The UvrABC repair system catalyzes the recognition and processing of DNA lesions. A damage recognition complex composed of 2 UvrA and 2 UvrB subunits scans DNA for abnormalities. Upon binding of the UvrA(2)B(2) complex to a putative damaged site, the DNA wraps around one UvrB monomer. DNA wrap is dependent on ATP binding by UvrB and probably causes local melting of the DNA helix, facilitating insertion of UvrB beta-hairpin between the DNA strands. Then UvrB probes one DNA strand for the presence of a lesion. If a lesion is found the UvrA subunits dissociate and the UvrB-DNA preincision complex is formed. This complex is subsequently bound by UvrC and the second UvrB is released. If no lesion is found, the DNA wraps around the other UvrB subunit that will check the other stand for damage.</text>
</comment>
<comment type="subunit">
    <text evidence="1">Forms a heterotetramer with UvrA during the search for lesions. Interacts with UvrC in an incision complex.</text>
</comment>
<comment type="subcellular location">
    <subcellularLocation>
        <location evidence="1">Cytoplasm</location>
    </subcellularLocation>
</comment>
<comment type="domain">
    <text evidence="1">The beta-hairpin motif is involved in DNA binding.</text>
</comment>
<comment type="similarity">
    <text evidence="1">Belongs to the UvrB family.</text>
</comment>
<evidence type="ECO:0000255" key="1">
    <source>
        <dbReference type="HAMAP-Rule" id="MF_00204"/>
    </source>
</evidence>
<evidence type="ECO:0000256" key="2">
    <source>
        <dbReference type="SAM" id="MobiDB-lite"/>
    </source>
</evidence>